<organism>
    <name type="scientific">Shigella boydii serotype 18 (strain CDC 3083-94 / BS512)</name>
    <dbReference type="NCBI Taxonomy" id="344609"/>
    <lineage>
        <taxon>Bacteria</taxon>
        <taxon>Pseudomonadati</taxon>
        <taxon>Pseudomonadota</taxon>
        <taxon>Gammaproteobacteria</taxon>
        <taxon>Enterobacterales</taxon>
        <taxon>Enterobacteriaceae</taxon>
        <taxon>Shigella</taxon>
    </lineage>
</organism>
<comment type="function">
    <text evidence="1">Phosphorolytic 3'-5' exoribonuclease that plays an important role in tRNA 3'-end maturation. Removes nucleotide residues following the 3'-CCA terminus of tRNAs; can also add nucleotides to the ends of RNA molecules by using nucleoside diphosphates as substrates, but this may not be physiologically important. Probably plays a role in initiation of 16S rRNA degradation (leading to ribosome degradation) during starvation.</text>
</comment>
<comment type="catalytic activity">
    <reaction evidence="1">
        <text>tRNA(n+1) + phosphate = tRNA(n) + a ribonucleoside 5'-diphosphate</text>
        <dbReference type="Rhea" id="RHEA:10628"/>
        <dbReference type="Rhea" id="RHEA-COMP:17343"/>
        <dbReference type="Rhea" id="RHEA-COMP:17344"/>
        <dbReference type="ChEBI" id="CHEBI:43474"/>
        <dbReference type="ChEBI" id="CHEBI:57930"/>
        <dbReference type="ChEBI" id="CHEBI:173114"/>
        <dbReference type="EC" id="2.7.7.56"/>
    </reaction>
</comment>
<comment type="subunit">
    <text evidence="1">Homohexameric ring arranged as a trimer of dimers.</text>
</comment>
<comment type="similarity">
    <text evidence="1">Belongs to the RNase PH family.</text>
</comment>
<accession>B2TTV7</accession>
<sequence>MRPAGRSNNQVRPVTLTRNYTKHAEGSVLVEFGDTKVLCTASIEEGVPRFLKGQGQGWITAEYGMLPRSTHTRNAREAAKGKQGGRTMEIQRLIARALRAAVDLKALGEFTITLDCDVLQADGGTRTASITGACVALADALQKLVENGKLKTNPMKGMVAAVSVGIVNGEAVCDLEYVEDSAAETDMNVVMTEDGRIIEVQGTAEGEPFTHEELLTLLALARGGIESIVATQKAALAN</sequence>
<reference key="1">
    <citation type="submission" date="2008-05" db="EMBL/GenBank/DDBJ databases">
        <title>Complete sequence of Shigella boydii serotype 18 strain BS512.</title>
        <authorList>
            <person name="Rasko D.A."/>
            <person name="Rosovitz M."/>
            <person name="Maurelli A.T."/>
            <person name="Myers G."/>
            <person name="Seshadri R."/>
            <person name="Cer R."/>
            <person name="Jiang L."/>
            <person name="Ravel J."/>
            <person name="Sebastian Y."/>
        </authorList>
    </citation>
    <scope>NUCLEOTIDE SEQUENCE [LARGE SCALE GENOMIC DNA]</scope>
    <source>
        <strain>CDC 3083-94 / BS512</strain>
    </source>
</reference>
<feature type="chain" id="PRO_1000129375" description="Ribonuclease PH">
    <location>
        <begin position="1"/>
        <end position="238"/>
    </location>
</feature>
<feature type="binding site" evidence="1">
    <location>
        <position position="86"/>
    </location>
    <ligand>
        <name>phosphate</name>
        <dbReference type="ChEBI" id="CHEBI:43474"/>
        <note>substrate</note>
    </ligand>
</feature>
<feature type="binding site" evidence="1">
    <location>
        <begin position="124"/>
        <end position="126"/>
    </location>
    <ligand>
        <name>phosphate</name>
        <dbReference type="ChEBI" id="CHEBI:43474"/>
        <note>substrate</note>
    </ligand>
</feature>
<dbReference type="EC" id="2.7.7.56" evidence="1"/>
<dbReference type="EMBL" id="CP001063">
    <property type="protein sequence ID" value="ACD10037.1"/>
    <property type="molecule type" value="Genomic_DNA"/>
</dbReference>
<dbReference type="RefSeq" id="WP_001247093.1">
    <property type="nucleotide sequence ID" value="NC_010658.1"/>
</dbReference>
<dbReference type="SMR" id="B2TTV7"/>
<dbReference type="STRING" id="344609.SbBS512_E4068"/>
<dbReference type="GeneID" id="93778358"/>
<dbReference type="KEGG" id="sbc:SbBS512_E4068"/>
<dbReference type="HOGENOM" id="CLU_050858_0_0_6"/>
<dbReference type="Proteomes" id="UP000001030">
    <property type="component" value="Chromosome"/>
</dbReference>
<dbReference type="GO" id="GO:0000175">
    <property type="term" value="F:3'-5'-RNA exonuclease activity"/>
    <property type="evidence" value="ECO:0007669"/>
    <property type="project" value="UniProtKB-UniRule"/>
</dbReference>
<dbReference type="GO" id="GO:0000049">
    <property type="term" value="F:tRNA binding"/>
    <property type="evidence" value="ECO:0007669"/>
    <property type="project" value="UniProtKB-UniRule"/>
</dbReference>
<dbReference type="GO" id="GO:0009022">
    <property type="term" value="F:tRNA nucleotidyltransferase activity"/>
    <property type="evidence" value="ECO:0007669"/>
    <property type="project" value="UniProtKB-UniRule"/>
</dbReference>
<dbReference type="GO" id="GO:0016075">
    <property type="term" value="P:rRNA catabolic process"/>
    <property type="evidence" value="ECO:0007669"/>
    <property type="project" value="UniProtKB-UniRule"/>
</dbReference>
<dbReference type="GO" id="GO:0006364">
    <property type="term" value="P:rRNA processing"/>
    <property type="evidence" value="ECO:0007669"/>
    <property type="project" value="UniProtKB-KW"/>
</dbReference>
<dbReference type="GO" id="GO:0008033">
    <property type="term" value="P:tRNA processing"/>
    <property type="evidence" value="ECO:0007669"/>
    <property type="project" value="UniProtKB-UniRule"/>
</dbReference>
<dbReference type="CDD" id="cd11362">
    <property type="entry name" value="RNase_PH_bact"/>
    <property type="match status" value="1"/>
</dbReference>
<dbReference type="FunFam" id="3.30.230.70:FF:000003">
    <property type="entry name" value="Ribonuclease PH"/>
    <property type="match status" value="1"/>
</dbReference>
<dbReference type="Gene3D" id="3.30.230.70">
    <property type="entry name" value="GHMP Kinase, N-terminal domain"/>
    <property type="match status" value="1"/>
</dbReference>
<dbReference type="HAMAP" id="MF_00564">
    <property type="entry name" value="RNase_PH"/>
    <property type="match status" value="1"/>
</dbReference>
<dbReference type="InterPro" id="IPR001247">
    <property type="entry name" value="ExoRNase_PH_dom1"/>
</dbReference>
<dbReference type="InterPro" id="IPR015847">
    <property type="entry name" value="ExoRNase_PH_dom2"/>
</dbReference>
<dbReference type="InterPro" id="IPR036345">
    <property type="entry name" value="ExoRNase_PH_dom2_sf"/>
</dbReference>
<dbReference type="InterPro" id="IPR027408">
    <property type="entry name" value="PNPase/RNase_PH_dom_sf"/>
</dbReference>
<dbReference type="InterPro" id="IPR020568">
    <property type="entry name" value="Ribosomal_Su5_D2-typ_SF"/>
</dbReference>
<dbReference type="InterPro" id="IPR050080">
    <property type="entry name" value="RNase_PH"/>
</dbReference>
<dbReference type="InterPro" id="IPR002381">
    <property type="entry name" value="RNase_PH_bac-type"/>
</dbReference>
<dbReference type="InterPro" id="IPR018336">
    <property type="entry name" value="RNase_PH_CS"/>
</dbReference>
<dbReference type="NCBIfam" id="TIGR01966">
    <property type="entry name" value="RNasePH"/>
    <property type="match status" value="1"/>
</dbReference>
<dbReference type="PANTHER" id="PTHR11953">
    <property type="entry name" value="EXOSOME COMPLEX COMPONENT"/>
    <property type="match status" value="1"/>
</dbReference>
<dbReference type="PANTHER" id="PTHR11953:SF0">
    <property type="entry name" value="EXOSOME COMPLEX COMPONENT RRP41"/>
    <property type="match status" value="1"/>
</dbReference>
<dbReference type="Pfam" id="PF01138">
    <property type="entry name" value="RNase_PH"/>
    <property type="match status" value="1"/>
</dbReference>
<dbReference type="Pfam" id="PF03725">
    <property type="entry name" value="RNase_PH_C"/>
    <property type="match status" value="1"/>
</dbReference>
<dbReference type="SUPFAM" id="SSF55666">
    <property type="entry name" value="Ribonuclease PH domain 2-like"/>
    <property type="match status" value="1"/>
</dbReference>
<dbReference type="SUPFAM" id="SSF54211">
    <property type="entry name" value="Ribosomal protein S5 domain 2-like"/>
    <property type="match status" value="1"/>
</dbReference>
<dbReference type="PROSITE" id="PS01277">
    <property type="entry name" value="RIBONUCLEASE_PH"/>
    <property type="match status" value="1"/>
</dbReference>
<name>RNPH_SHIB3</name>
<protein>
    <recommendedName>
        <fullName evidence="1">Ribonuclease PH</fullName>
        <shortName evidence="1">RNase PH</shortName>
        <ecNumber evidence="1">2.7.7.56</ecNumber>
    </recommendedName>
    <alternativeName>
        <fullName evidence="1">tRNA nucleotidyltransferase</fullName>
    </alternativeName>
</protein>
<gene>
    <name evidence="1" type="primary">rph</name>
    <name type="ordered locus">SbBS512_E4068</name>
</gene>
<keyword id="KW-0548">Nucleotidyltransferase</keyword>
<keyword id="KW-1185">Reference proteome</keyword>
<keyword id="KW-0694">RNA-binding</keyword>
<keyword id="KW-0698">rRNA processing</keyword>
<keyword id="KW-0808">Transferase</keyword>
<keyword id="KW-0819">tRNA processing</keyword>
<keyword id="KW-0820">tRNA-binding</keyword>
<evidence type="ECO:0000255" key="1">
    <source>
        <dbReference type="HAMAP-Rule" id="MF_00564"/>
    </source>
</evidence>
<proteinExistence type="inferred from homology"/>